<protein>
    <recommendedName>
        <fullName>Maturase K</fullName>
    </recommendedName>
    <alternativeName>
        <fullName>Intron maturase</fullName>
    </alternativeName>
</protein>
<reference key="1">
    <citation type="journal article" date="1992" name="Proc. Natl. Acad. Sci. U.S.A.">
        <title>Function and evolution of a minimal plastid genome from a nonphotosynthetic parasitic plant.</title>
        <authorList>
            <person name="Wolfe K.H."/>
            <person name="Morden C.W."/>
            <person name="Palmer J.D."/>
        </authorList>
    </citation>
    <scope>NUCLEOTIDE SEQUENCE [LARGE SCALE GENOMIC DNA]</scope>
</reference>
<reference key="2">
    <citation type="journal article" date="1992" name="J. Mol. Evol.">
        <title>Rapid evolution of the plastid translational apparatus in a nonphotosynthetic plant: loss or accelerated sequence evolution of tRNA and ribosomal protein genes.</title>
        <authorList>
            <person name="Wolfe K.H."/>
            <person name="Morden C.W."/>
            <person name="Ems S.C."/>
            <person name="Palmer J.D."/>
        </authorList>
    </citation>
    <scope>NUCLEOTIDE SEQUENCE [GENOMIC DNA]</scope>
</reference>
<reference key="3">
    <citation type="journal article" date="1995" name="Plant Mol. Biol.">
        <title>Transcription, splicing and editing of plastid RNAs in the nonphotosynthetic plant Epifagus virginiana.</title>
        <authorList>
            <person name="Ems S.C."/>
            <person name="Morden C.W."/>
            <person name="Dixon C.K."/>
            <person name="Wolfe K.H."/>
            <person name="dePamphilis C.W."/>
            <person name="Palmer J.D."/>
        </authorList>
    </citation>
    <scope>POSSIBLE FUNCTION</scope>
</reference>
<organism>
    <name type="scientific">Epifagus virginiana</name>
    <name type="common">Beechdrops</name>
    <name type="synonym">Orobanche virginiana</name>
    <dbReference type="NCBI Taxonomy" id="4177"/>
    <lineage>
        <taxon>Eukaryota</taxon>
        <taxon>Viridiplantae</taxon>
        <taxon>Streptophyta</taxon>
        <taxon>Embryophyta</taxon>
        <taxon>Tracheophyta</taxon>
        <taxon>Spermatophyta</taxon>
        <taxon>Magnoliopsida</taxon>
        <taxon>eudicotyledons</taxon>
        <taxon>Gunneridae</taxon>
        <taxon>Pentapetalae</taxon>
        <taxon>asterids</taxon>
        <taxon>lamiids</taxon>
        <taxon>Lamiales</taxon>
        <taxon>Orobanchaceae</taxon>
        <taxon>Orobancheae</taxon>
        <taxon>Epifagus</taxon>
    </lineage>
</organism>
<proteinExistence type="inferred from homology"/>
<evidence type="ECO:0000305" key="1"/>
<accession>P30071</accession>
<dbReference type="EMBL" id="M81884">
    <property type="protein sequence ID" value="AAA65850.1"/>
    <property type="molecule type" value="Genomic_DNA"/>
</dbReference>
<dbReference type="PIR" id="S78378">
    <property type="entry name" value="S78378"/>
</dbReference>
<dbReference type="RefSeq" id="NP_054376.1">
    <property type="nucleotide sequence ID" value="NC_001568.1"/>
</dbReference>
<dbReference type="GeneID" id="801412"/>
<dbReference type="GO" id="GO:0009507">
    <property type="term" value="C:chloroplast"/>
    <property type="evidence" value="ECO:0007669"/>
    <property type="project" value="UniProtKB-UniRule"/>
</dbReference>
<dbReference type="GO" id="GO:0003723">
    <property type="term" value="F:RNA binding"/>
    <property type="evidence" value="ECO:0007669"/>
    <property type="project" value="UniProtKB-KW"/>
</dbReference>
<dbReference type="GO" id="GO:0006397">
    <property type="term" value="P:mRNA processing"/>
    <property type="evidence" value="ECO:0007669"/>
    <property type="project" value="UniProtKB-KW"/>
</dbReference>
<dbReference type="GO" id="GO:0008380">
    <property type="term" value="P:RNA splicing"/>
    <property type="evidence" value="ECO:0007669"/>
    <property type="project" value="UniProtKB-UniRule"/>
</dbReference>
<dbReference type="GO" id="GO:0008033">
    <property type="term" value="P:tRNA processing"/>
    <property type="evidence" value="ECO:0007669"/>
    <property type="project" value="UniProtKB-KW"/>
</dbReference>
<dbReference type="HAMAP" id="MF_01390">
    <property type="entry name" value="MatK"/>
    <property type="match status" value="1"/>
</dbReference>
<dbReference type="InterPro" id="IPR024937">
    <property type="entry name" value="Domain_X"/>
</dbReference>
<dbReference type="InterPro" id="IPR002866">
    <property type="entry name" value="Maturase_MatK"/>
</dbReference>
<dbReference type="InterPro" id="IPR024942">
    <property type="entry name" value="Maturase_MatK_N"/>
</dbReference>
<dbReference type="PANTHER" id="PTHR34811">
    <property type="entry name" value="MATURASE K"/>
    <property type="match status" value="1"/>
</dbReference>
<dbReference type="PANTHER" id="PTHR34811:SF1">
    <property type="entry name" value="MATURASE K"/>
    <property type="match status" value="1"/>
</dbReference>
<dbReference type="Pfam" id="PF01348">
    <property type="entry name" value="Intron_maturas2"/>
    <property type="match status" value="1"/>
</dbReference>
<dbReference type="Pfam" id="PF01824">
    <property type="entry name" value="MatK_N"/>
    <property type="match status" value="1"/>
</dbReference>
<keyword id="KW-0507">mRNA processing</keyword>
<keyword id="KW-0934">Plastid</keyword>
<keyword id="KW-0694">RNA-binding</keyword>
<keyword id="KW-0819">tRNA processing</keyword>
<name>MATK_EPIVI</name>
<sequence>MYKQNLFIISSNDSKYNFLLRNKKLYYEIILEGLTFILEFFFFIRLISYLEGKKNKIEKLNNLRSILSIFPFLEDNFSNLKFILDILIPRKVHAEILVQTLRYWIKDATYLHLLRFWLNNNWNSIINQNKDGYFYPQKNKILLLLYNSYVCKYESIFVFLRNQSYHFRSTPFIMLLERIYFYFKIERLVNPFLKVKDFKANLWLIKEPCLHYFRYRRQYILASKGTSLFLNKWKCYVITFWQWYFSLWFFSRSIYIKKLLNNSFEILTYHSSLNINPSFVLSQILETPFISNNTIKKVNILVPIILSISDKEKFFNVLGHPTSNLFRVDLSDYNIIGRLECIYRNLYHYLSGSSKKNSLYLIKYILLLSCVRTLARKHKSTVRTFAFQKKRLCLELLEGFFISEEDILFLKFQKVYSSLGGVYISQFWYLNIYSINYLA</sequence>
<geneLocation type="non-photosynthetic plastid"/>
<comment type="function">
    <text>Usually encoded in the trnK tRNA gene intron. Its retention as a freestanding gene in this organism suggests it acts in trans to assist in splicing chloroplast group II introns.</text>
</comment>
<comment type="subcellular location">
    <subcellularLocation>
        <location>Plastid</location>
    </subcellularLocation>
</comment>
<comment type="similarity">
    <text evidence="1">Belongs to the intron maturase 2 family. MatK subfamily.</text>
</comment>
<gene>
    <name type="primary">matK</name>
    <name type="synonym">ycf14</name>
</gene>
<feature type="chain" id="PRO_0000143374" description="Maturase K">
    <location>
        <begin position="1"/>
        <end position="439"/>
    </location>
</feature>